<proteinExistence type="evidence at protein level"/>
<name>CM3B_CONAO</name>
<feature type="peptide" id="PRO_0000441661" description="Conotoxin ar3b" evidence="2">
    <location>
        <begin position="1"/>
        <end position="16"/>
    </location>
</feature>
<feature type="peptide" id="PRO_0000441662" description="Conotoxin ar3a" evidence="2">
    <location>
        <begin position="1"/>
        <end position="15"/>
    </location>
</feature>
<feature type="disulfide bond" evidence="1">
    <location>
        <begin position="1"/>
        <end position="13"/>
    </location>
</feature>
<feature type="disulfide bond" evidence="1">
    <location>
        <begin position="2"/>
        <end position="11"/>
    </location>
</feature>
<feature type="disulfide bond" evidence="1">
    <location>
        <begin position="7"/>
        <end position="14"/>
    </location>
</feature>
<feature type="unsure residue" description="I or L" evidence="3">
    <location>
        <position position="10"/>
    </location>
</feature>
<protein>
    <recommendedName>
        <fullName evidence="3">Conotoxin ar3b</fullName>
    </recommendedName>
    <component>
        <recommendedName>
            <fullName evidence="3">Conotoxin ar3a</fullName>
        </recommendedName>
    </component>
</protein>
<dbReference type="GO" id="GO:0005576">
    <property type="term" value="C:extracellular region"/>
    <property type="evidence" value="ECO:0000314"/>
    <property type="project" value="UniProtKB"/>
</dbReference>
<dbReference type="GO" id="GO:0090729">
    <property type="term" value="F:toxin activity"/>
    <property type="evidence" value="ECO:0007669"/>
    <property type="project" value="UniProtKB-KW"/>
</dbReference>
<organism>
    <name type="scientific">Conus araneosus</name>
    <name type="common">Cobweb cone</name>
    <dbReference type="NCBI Taxonomy" id="101286"/>
    <lineage>
        <taxon>Eukaryota</taxon>
        <taxon>Metazoa</taxon>
        <taxon>Spiralia</taxon>
        <taxon>Lophotrochozoa</taxon>
        <taxon>Mollusca</taxon>
        <taxon>Gastropoda</taxon>
        <taxon>Caenogastropoda</taxon>
        <taxon>Neogastropoda</taxon>
        <taxon>Conoidea</taxon>
        <taxon>Conidae</taxon>
        <taxon>Conus</taxon>
    </lineage>
</organism>
<comment type="subcellular location">
    <subcellularLocation>
        <location evidence="2">Secreted</location>
    </subcellularLocation>
</comment>
<comment type="tissue specificity">
    <text evidence="5">Expressed by the venom duct.</text>
</comment>
<comment type="domain">
    <text evidence="3">The cysteine framework is III (CC-C-C-CC). Classified in the M-1 branch, since 1 residue stands between the fourth and the fifth cysteine residues.</text>
</comment>
<comment type="mass spectrometry">
    <molecule>Conotoxin ar3b</molecule>
    <text>Conotoxin ar3b.</text>
</comment>
<comment type="mass spectrometry">
    <molecule>Conotoxin ar3a</molecule>
    <text>Conotoxin ar3a.</text>
</comment>
<comment type="similarity">
    <text evidence="4">Belongs to the conotoxin M superfamily.</text>
</comment>
<evidence type="ECO:0000250" key="1">
    <source>
        <dbReference type="UniProtKB" id="Q5EHP3"/>
    </source>
</evidence>
<evidence type="ECO:0000269" key="2">
    <source>
    </source>
</evidence>
<evidence type="ECO:0000303" key="3">
    <source>
    </source>
</evidence>
<evidence type="ECO:0000305" key="4"/>
<evidence type="ECO:0000305" key="5">
    <source>
    </source>
</evidence>
<accession>C0HKY6</accession>
<keyword id="KW-0903">Direct protein sequencing</keyword>
<keyword id="KW-1015">Disulfide bond</keyword>
<keyword id="KW-0964">Secreted</keyword>
<keyword id="KW-0800">Toxin</keyword>
<reference key="1">
    <citation type="journal article" date="2015" name="Toxicon">
        <title>A sleep-inducing peptide from the venom of the Indian cone snail Conus araneosus.</title>
        <authorList>
            <person name="Franklin J.B."/>
            <person name="Rajesh R.P."/>
        </authorList>
    </citation>
    <scope>PROTEIN SEQUENCE</scope>
    <scope>SUBCELLULAR LOCATION</scope>
    <scope>MASS SPECTROMETRY</scope>
    <scope>IDENTIFICATION BY MASS SPECTROMETRY</scope>
    <source>
        <tissue>Venom</tissue>
    </source>
</reference>
<sequence>CCDWDWCDHICTCCGG</sequence>